<name>APPC_ECOLI</name>
<gene>
    <name type="primary">appC</name>
    <name type="synonym">cbdA</name>
    <name type="synonym">cyxA</name>
    <name type="ordered locus">b0978</name>
    <name type="ordered locus">JW0960</name>
</gene>
<feature type="chain" id="PRO_0000183922" description="Cytochrome bd-II ubiquinol oxidase subunit 1">
    <location>
        <begin position="1"/>
        <end position="514"/>
    </location>
</feature>
<feature type="topological domain" description="Cytoplasmic" evidence="1">
    <location>
        <begin position="1"/>
        <end position="22"/>
    </location>
</feature>
<feature type="transmembrane region" description="Helical" evidence="1">
    <location>
        <begin position="23"/>
        <end position="42"/>
    </location>
</feature>
<feature type="topological domain" description="Periplasmic" evidence="1">
    <location>
        <begin position="43"/>
        <end position="94"/>
    </location>
</feature>
<feature type="transmembrane region" description="Helical" evidence="1">
    <location>
        <begin position="95"/>
        <end position="114"/>
    </location>
</feature>
<feature type="topological domain" description="Cytoplasmic" evidence="1">
    <location>
        <begin position="115"/>
        <end position="129"/>
    </location>
</feature>
<feature type="transmembrane region" description="Helical" evidence="1">
    <location>
        <begin position="130"/>
        <end position="149"/>
    </location>
</feature>
<feature type="topological domain" description="Periplasmic" evidence="1">
    <location>
        <begin position="150"/>
        <end position="187"/>
    </location>
</feature>
<feature type="transmembrane region" description="Helical" evidence="1">
    <location>
        <begin position="188"/>
        <end position="207"/>
    </location>
</feature>
<feature type="topological domain" description="Cytoplasmic" evidence="1">
    <location>
        <begin position="208"/>
        <end position="219"/>
    </location>
</feature>
<feature type="transmembrane region" description="Helical" evidence="1">
    <location>
        <begin position="220"/>
        <end position="239"/>
    </location>
</feature>
<feature type="topological domain" description="Periplasmic" evidence="1">
    <location>
        <begin position="240"/>
        <end position="392"/>
    </location>
</feature>
<feature type="transmembrane region" description="Helical" evidence="1">
    <location>
        <begin position="393"/>
        <end position="412"/>
    </location>
</feature>
<feature type="topological domain" description="Cytoplasmic" evidence="1">
    <location>
        <begin position="413"/>
        <end position="470"/>
    </location>
</feature>
<feature type="transmembrane region" description="Helical" evidence="1">
    <location>
        <begin position="471"/>
        <end position="490"/>
    </location>
</feature>
<feature type="topological domain" description="Periplasmic" evidence="1">
    <location>
        <begin position="491"/>
        <end position="514"/>
    </location>
</feature>
<feature type="binding site" description="axial binding residue" evidence="1">
    <location>
        <position position="19"/>
    </location>
    <ligand>
        <name>heme</name>
        <dbReference type="ChEBI" id="CHEBI:30413"/>
        <label>1</label>
    </ligand>
    <ligandPart>
        <name>Fe</name>
        <dbReference type="ChEBI" id="CHEBI:18248"/>
    </ligandPart>
</feature>
<feature type="binding site" description="axial binding residue" evidence="1">
    <location>
        <position position="186"/>
    </location>
    <ligand>
        <name>heme</name>
        <dbReference type="ChEBI" id="CHEBI:30413"/>
        <label>2</label>
    </ligand>
    <ligandPart>
        <name>Fe</name>
        <dbReference type="ChEBI" id="CHEBI:18248"/>
    </ligandPart>
</feature>
<feature type="binding site" description="axial binding residue" evidence="1">
    <location>
        <position position="393"/>
    </location>
    <ligand>
        <name>heme</name>
        <dbReference type="ChEBI" id="CHEBI:30413"/>
        <label>2</label>
    </ligand>
    <ligandPart>
        <name>Fe</name>
        <dbReference type="ChEBI" id="CHEBI:18248"/>
    </ligandPart>
</feature>
<feature type="helix" evidence="12">
    <location>
        <begin position="4"/>
        <end position="43"/>
    </location>
</feature>
<feature type="helix" evidence="12">
    <location>
        <begin position="46"/>
        <end position="80"/>
    </location>
</feature>
<feature type="helix" evidence="12">
    <location>
        <begin position="82"/>
        <end position="116"/>
    </location>
</feature>
<feature type="turn" evidence="12">
    <location>
        <begin position="118"/>
        <end position="120"/>
    </location>
</feature>
<feature type="helix" evidence="12">
    <location>
        <begin position="123"/>
        <end position="152"/>
    </location>
</feature>
<feature type="strand" evidence="12">
    <location>
        <begin position="156"/>
        <end position="160"/>
    </location>
</feature>
<feature type="turn" evidence="12">
    <location>
        <begin position="161"/>
        <end position="164"/>
    </location>
</feature>
<feature type="strand" evidence="12">
    <location>
        <begin position="165"/>
        <end position="169"/>
    </location>
</feature>
<feature type="helix" evidence="12">
    <location>
        <begin position="171"/>
        <end position="175"/>
    </location>
</feature>
<feature type="helix" evidence="12">
    <location>
        <begin position="178"/>
        <end position="208"/>
    </location>
</feature>
<feature type="strand" evidence="11">
    <location>
        <begin position="209"/>
        <end position="211"/>
    </location>
</feature>
<feature type="helix" evidence="12">
    <location>
        <begin position="213"/>
        <end position="248"/>
    </location>
</feature>
<feature type="helix" evidence="12">
    <location>
        <begin position="250"/>
        <end position="256"/>
    </location>
</feature>
<feature type="strand" evidence="11">
    <location>
        <begin position="269"/>
        <end position="272"/>
    </location>
</feature>
<feature type="turn" evidence="11">
    <location>
        <begin position="277"/>
        <end position="280"/>
    </location>
</feature>
<feature type="strand" evidence="11">
    <location>
        <begin position="286"/>
        <end position="288"/>
    </location>
</feature>
<feature type="helix" evidence="11">
    <location>
        <begin position="292"/>
        <end position="297"/>
    </location>
</feature>
<feature type="strand" evidence="11">
    <location>
        <begin position="298"/>
        <end position="301"/>
    </location>
</feature>
<feature type="helix" evidence="12">
    <location>
        <begin position="310"/>
        <end position="332"/>
    </location>
</feature>
<feature type="helix" evidence="12">
    <location>
        <begin position="338"/>
        <end position="347"/>
    </location>
</feature>
<feature type="helix" evidence="12">
    <location>
        <begin position="348"/>
        <end position="350"/>
    </location>
</feature>
<feature type="helix" evidence="12">
    <location>
        <begin position="351"/>
        <end position="360"/>
    </location>
</feature>
<feature type="strand" evidence="12">
    <location>
        <begin position="364"/>
        <end position="366"/>
    </location>
</feature>
<feature type="helix" evidence="12">
    <location>
        <begin position="369"/>
        <end position="378"/>
    </location>
</feature>
<feature type="helix" evidence="12">
    <location>
        <begin position="383"/>
        <end position="413"/>
    </location>
</feature>
<feature type="turn" evidence="12">
    <location>
        <begin position="416"/>
        <end position="418"/>
    </location>
</feature>
<feature type="helix" evidence="12">
    <location>
        <begin position="420"/>
        <end position="428"/>
    </location>
</feature>
<feature type="turn" evidence="12">
    <location>
        <begin position="429"/>
        <end position="431"/>
    </location>
</feature>
<feature type="helix" evidence="12">
    <location>
        <begin position="432"/>
        <end position="446"/>
    </location>
</feature>
<feature type="turn" evidence="12">
    <location>
        <begin position="447"/>
        <end position="450"/>
    </location>
</feature>
<feature type="strand" evidence="12">
    <location>
        <begin position="451"/>
        <end position="453"/>
    </location>
</feature>
<feature type="turn" evidence="12">
    <location>
        <begin position="454"/>
        <end position="456"/>
    </location>
</feature>
<feature type="helix" evidence="12">
    <location>
        <begin position="459"/>
        <end position="462"/>
    </location>
</feature>
<feature type="helix" evidence="12">
    <location>
        <begin position="468"/>
        <end position="499"/>
    </location>
</feature>
<feature type="helix" evidence="12">
    <location>
        <begin position="501"/>
        <end position="503"/>
    </location>
</feature>
<proteinExistence type="evidence at protein level"/>
<evidence type="ECO:0000255" key="1"/>
<evidence type="ECO:0000269" key="2">
    <source>
    </source>
</evidence>
<evidence type="ECO:0000269" key="3">
    <source>
    </source>
</evidence>
<evidence type="ECO:0000269" key="4">
    <source>
    </source>
</evidence>
<evidence type="ECO:0000269" key="5">
    <source>
    </source>
</evidence>
<evidence type="ECO:0000269" key="6">
    <source>
    </source>
</evidence>
<evidence type="ECO:0000269" key="7">
    <source>
    </source>
</evidence>
<evidence type="ECO:0000305" key="8"/>
<evidence type="ECO:0000305" key="9">
    <source>
    </source>
</evidence>
<evidence type="ECO:0000305" key="10">
    <source>
    </source>
</evidence>
<evidence type="ECO:0007829" key="11">
    <source>
        <dbReference type="PDB" id="7OSE"/>
    </source>
</evidence>
<evidence type="ECO:0007829" key="12">
    <source>
        <dbReference type="PDB" id="7OY2"/>
    </source>
</evidence>
<reference key="1">
    <citation type="journal article" date="1991" name="Mol. Gen. Genet.">
        <title>A new oxygen-regulated operon in Escherichia coli comprises the genes for a putative third cytochrome oxidase and for pH 2.5 acid phosphatase (appA).</title>
        <authorList>
            <person name="Dassa J."/>
            <person name="Fsihi H."/>
            <person name="Marck C."/>
            <person name="Dion M."/>
            <person name="Kieffer-Bontemps M."/>
            <person name="Boquet P.L."/>
        </authorList>
    </citation>
    <scope>NUCLEOTIDE SEQUENCE [GENOMIC DNA]</scope>
    <scope>INDUCTION</scope>
    <source>
        <strain>K12</strain>
    </source>
</reference>
<reference key="2">
    <citation type="journal article" date="1996" name="DNA Res.">
        <title>A 718-kb DNA sequence of the Escherichia coli K-12 genome corresponding to the 12.7-28.0 min region on the linkage map.</title>
        <authorList>
            <person name="Oshima T."/>
            <person name="Aiba H."/>
            <person name="Baba T."/>
            <person name="Fujita K."/>
            <person name="Hayashi K."/>
            <person name="Honjo A."/>
            <person name="Ikemoto K."/>
            <person name="Inada T."/>
            <person name="Itoh T."/>
            <person name="Kajihara M."/>
            <person name="Kanai K."/>
            <person name="Kashimoto K."/>
            <person name="Kimura S."/>
            <person name="Kitagawa M."/>
            <person name="Makino K."/>
            <person name="Masuda S."/>
            <person name="Miki T."/>
            <person name="Mizobuchi K."/>
            <person name="Mori H."/>
            <person name="Motomura K."/>
            <person name="Nakamura Y."/>
            <person name="Nashimoto H."/>
            <person name="Nishio Y."/>
            <person name="Saito N."/>
            <person name="Sampei G."/>
            <person name="Seki Y."/>
            <person name="Tagami H."/>
            <person name="Takemoto K."/>
            <person name="Wada C."/>
            <person name="Yamamoto Y."/>
            <person name="Yano M."/>
            <person name="Horiuchi T."/>
        </authorList>
    </citation>
    <scope>NUCLEOTIDE SEQUENCE [LARGE SCALE GENOMIC DNA]</scope>
    <source>
        <strain>K12 / W3110 / ATCC 27325 / DSM 5911</strain>
    </source>
</reference>
<reference key="3">
    <citation type="journal article" date="1997" name="Science">
        <title>The complete genome sequence of Escherichia coli K-12.</title>
        <authorList>
            <person name="Blattner F.R."/>
            <person name="Plunkett G. III"/>
            <person name="Bloch C.A."/>
            <person name="Perna N.T."/>
            <person name="Burland V."/>
            <person name="Riley M."/>
            <person name="Collado-Vides J."/>
            <person name="Glasner J.D."/>
            <person name="Rode C.K."/>
            <person name="Mayhew G.F."/>
            <person name="Gregor J."/>
            <person name="Davis N.W."/>
            <person name="Kirkpatrick H.A."/>
            <person name="Goeden M.A."/>
            <person name="Rose D.J."/>
            <person name="Mau B."/>
            <person name="Shao Y."/>
        </authorList>
    </citation>
    <scope>NUCLEOTIDE SEQUENCE [LARGE SCALE GENOMIC DNA]</scope>
    <source>
        <strain>K12 / MG1655 / ATCC 47076</strain>
    </source>
</reference>
<reference key="4">
    <citation type="journal article" date="2006" name="Mol. Syst. Biol.">
        <title>Highly accurate genome sequences of Escherichia coli K-12 strains MG1655 and W3110.</title>
        <authorList>
            <person name="Hayashi K."/>
            <person name="Morooka N."/>
            <person name="Yamamoto Y."/>
            <person name="Fujita K."/>
            <person name="Isono K."/>
            <person name="Choi S."/>
            <person name="Ohtsubo E."/>
            <person name="Baba T."/>
            <person name="Wanner B.L."/>
            <person name="Mori H."/>
            <person name="Horiuchi T."/>
        </authorList>
    </citation>
    <scope>NUCLEOTIDE SEQUENCE [LARGE SCALE GENOMIC DNA]</scope>
    <source>
        <strain>K12 / W3110 / ATCC 27325 / DSM 5911</strain>
    </source>
</reference>
<reference key="5">
    <citation type="journal article" date="1996" name="J. Bacteriol.">
        <title>Purification of a cytochrome bd terminal oxidase encoded by the Escherichia coli app locus from a delta cyo delta cyd strain complemented by genes from Bacillus firmus OF4.</title>
        <authorList>
            <person name="Sturr M.G."/>
            <person name="Krulwich T.A."/>
            <person name="Hicks D.B."/>
        </authorList>
    </citation>
    <scope>FUNCTION AS AN OXIDASE</scope>
    <scope>ACTIVITY REGULATION</scope>
    <scope>SUBUNIT</scope>
    <scope>PROTEIN SEQUENCE OF 496-510</scope>
</reference>
<reference key="6">
    <citation type="journal article" date="2005" name="Science">
        <title>Global topology analysis of the Escherichia coli inner membrane proteome.</title>
        <authorList>
            <person name="Daley D.O."/>
            <person name="Rapp M."/>
            <person name="Granseth E."/>
            <person name="Melen K."/>
            <person name="Drew D."/>
            <person name="von Heijne G."/>
        </authorList>
    </citation>
    <scope>SUBCELLULAR LOCATION</scope>
    <source>
        <strain>K12 / MG1655 / ATCC 47076</strain>
    </source>
</reference>
<reference key="7">
    <citation type="journal article" date="2009" name="J. Bacteriol.">
        <title>Respiration of Escherichia coli can be fully uncoupled via the nonelectrogenic terminal cytochrome bd-II oxidase.</title>
        <authorList>
            <person name="Bekker M."/>
            <person name="de Vries S."/>
            <person name="Ter Beek A."/>
            <person name="Hellingwerf K.J."/>
            <person name="de Mattos M.J."/>
        </authorList>
    </citation>
    <scope>FUNCTION AS AN OXIDASE</scope>
    <scope>DISRUPTION PHENOTYPE</scope>
    <source>
        <strain>K12</strain>
    </source>
</reference>
<reference key="8">
    <citation type="journal article" date="2011" name="Proc. Natl. Acad. Sci. U.S.A.">
        <title>Aerobic respiratory chain of Escherichia coli is not allowed to work in fully uncoupled mode.</title>
        <authorList>
            <person name="Borisov V.B."/>
            <person name="Murali R."/>
            <person name="Verkhovskaya M.L."/>
            <person name="Bloch D.A."/>
            <person name="Han H."/>
            <person name="Gennis R.B."/>
            <person name="Verkhovsky M.I."/>
        </authorList>
    </citation>
    <scope>FUNCTION AS AN OXIDASE</scope>
    <scope>FUNCTION IN PROTON TRANSLOCATION</scope>
    <scope>DISRUPTION PHENOTYPE</scope>
    <source>
        <strain>K12</strain>
    </source>
</reference>
<reference key="9">
    <citation type="journal article" date="2012" name="Appl. Environ. Microbiol.">
        <title>Uncoupling of substrate-level phosphorylation in Escherichia coli during glucose-limited growth.</title>
        <authorList>
            <person name="Sharma P."/>
            <person name="Hellingwerf K.J."/>
            <person name="de Mattos M.J."/>
            <person name="Bekker M."/>
        </authorList>
    </citation>
    <scope>FUNCTION AS AN OXIDASE</scope>
    <scope>FUNCTION IN PROTON TRANSLOCATION</scope>
    <scope>DISRUPTION PHENOTYPE</scope>
    <source>
        <strain>K12</strain>
    </source>
</reference>
<reference key="10">
    <citation type="journal article" date="2011" name="Biochim. Biophys. Acta">
        <title>The cytochrome bd respiratory oxygen reductases.</title>
        <authorList>
            <person name="Borisov V.B."/>
            <person name="Gennis R.B."/>
            <person name="Hemp J."/>
            <person name="Verkhovsky M.I."/>
        </authorList>
    </citation>
    <scope>REVIEW</scope>
</reference>
<accession>P26459</accession>
<organism>
    <name type="scientific">Escherichia coli (strain K12)</name>
    <dbReference type="NCBI Taxonomy" id="83333"/>
    <lineage>
        <taxon>Bacteria</taxon>
        <taxon>Pseudomonadati</taxon>
        <taxon>Pseudomonadota</taxon>
        <taxon>Gammaproteobacteria</taxon>
        <taxon>Enterobacterales</taxon>
        <taxon>Enterobacteriaceae</taxon>
        <taxon>Escherichia</taxon>
    </lineage>
</organism>
<dbReference type="EC" id="7.1.1.3" evidence="8"/>
<dbReference type="EMBL" id="S63811">
    <property type="protein sequence ID" value="AAB20284.1"/>
    <property type="molecule type" value="Genomic_DNA"/>
</dbReference>
<dbReference type="EMBL" id="U00096">
    <property type="protein sequence ID" value="AAC74063.1"/>
    <property type="molecule type" value="Genomic_DNA"/>
</dbReference>
<dbReference type="EMBL" id="AP009048">
    <property type="protein sequence ID" value="BAA35743.1"/>
    <property type="molecule type" value="Genomic_DNA"/>
</dbReference>
<dbReference type="PIR" id="S17958">
    <property type="entry name" value="S17958"/>
</dbReference>
<dbReference type="RefSeq" id="NP_415497.1">
    <property type="nucleotide sequence ID" value="NC_000913.3"/>
</dbReference>
<dbReference type="RefSeq" id="WP_000263582.1">
    <property type="nucleotide sequence ID" value="NZ_LN832404.1"/>
</dbReference>
<dbReference type="PDB" id="7OSE">
    <property type="method" value="EM"/>
    <property type="resolution" value="3.00 A"/>
    <property type="chains" value="A/D=1-514"/>
</dbReference>
<dbReference type="PDB" id="7OY2">
    <property type="method" value="EM"/>
    <property type="resolution" value="2.06 A"/>
    <property type="chains" value="C=1-514"/>
</dbReference>
<dbReference type="PDBsum" id="7OSE"/>
<dbReference type="PDBsum" id="7OY2"/>
<dbReference type="EMDB" id="EMD-13048"/>
<dbReference type="EMDB" id="EMD-13108"/>
<dbReference type="SMR" id="P26459"/>
<dbReference type="BioGRID" id="4260039">
    <property type="interactions" value="243"/>
</dbReference>
<dbReference type="ComplexPortal" id="CPX-269">
    <property type="entry name" value="Cytochrome bd-II ubiquinol oxidase complex"/>
</dbReference>
<dbReference type="DIP" id="DIP-9119N"/>
<dbReference type="FunCoup" id="P26459">
    <property type="interactions" value="448"/>
</dbReference>
<dbReference type="IntAct" id="P26459">
    <property type="interactions" value="2"/>
</dbReference>
<dbReference type="STRING" id="511145.b0978"/>
<dbReference type="jPOST" id="P26459"/>
<dbReference type="PaxDb" id="511145-b0978"/>
<dbReference type="EnsemblBacteria" id="AAC74063">
    <property type="protein sequence ID" value="AAC74063"/>
    <property type="gene ID" value="b0978"/>
</dbReference>
<dbReference type="GeneID" id="945585"/>
<dbReference type="KEGG" id="ecj:JW0960"/>
<dbReference type="KEGG" id="eco:b0978"/>
<dbReference type="KEGG" id="ecoc:C3026_05965"/>
<dbReference type="PATRIC" id="fig|511145.12.peg.1012"/>
<dbReference type="EchoBASE" id="EB1354"/>
<dbReference type="eggNOG" id="COG1271">
    <property type="taxonomic scope" value="Bacteria"/>
</dbReference>
<dbReference type="HOGENOM" id="CLU_030555_3_1_6"/>
<dbReference type="InParanoid" id="P26459"/>
<dbReference type="OMA" id="TIPNVWV"/>
<dbReference type="OrthoDB" id="9807042at2"/>
<dbReference type="PhylomeDB" id="P26459"/>
<dbReference type="BioCyc" id="EcoCyc:APPC-MONOMER"/>
<dbReference type="BioCyc" id="MetaCyc:APPC-MONOMER"/>
<dbReference type="BRENDA" id="7.1.1.3">
    <property type="organism ID" value="2026"/>
</dbReference>
<dbReference type="UniPathway" id="UPA00705"/>
<dbReference type="PRO" id="PR:P26459"/>
<dbReference type="Proteomes" id="UP000000625">
    <property type="component" value="Chromosome"/>
</dbReference>
<dbReference type="GO" id="GO:0070069">
    <property type="term" value="C:cytochrome complex"/>
    <property type="evidence" value="ECO:0000314"/>
    <property type="project" value="EcoCyc"/>
</dbReference>
<dbReference type="GO" id="GO:0016020">
    <property type="term" value="C:membrane"/>
    <property type="evidence" value="ECO:0007005"/>
    <property type="project" value="UniProtKB"/>
</dbReference>
<dbReference type="GO" id="GO:0005886">
    <property type="term" value="C:plasma membrane"/>
    <property type="evidence" value="ECO:0000314"/>
    <property type="project" value="EcoCyc"/>
</dbReference>
<dbReference type="GO" id="GO:0009486">
    <property type="term" value="F:cytochrome bo3 ubiquinol oxidase activity"/>
    <property type="evidence" value="ECO:0007669"/>
    <property type="project" value="UniProtKB-EC"/>
</dbReference>
<dbReference type="GO" id="GO:0009055">
    <property type="term" value="F:electron transfer activity"/>
    <property type="evidence" value="ECO:0000314"/>
    <property type="project" value="EcoCyc"/>
</dbReference>
<dbReference type="GO" id="GO:0020037">
    <property type="term" value="F:heme binding"/>
    <property type="evidence" value="ECO:0000314"/>
    <property type="project" value="EcoCyc"/>
</dbReference>
<dbReference type="GO" id="GO:0046872">
    <property type="term" value="F:metal ion binding"/>
    <property type="evidence" value="ECO:0007669"/>
    <property type="project" value="UniProtKB-KW"/>
</dbReference>
<dbReference type="GO" id="GO:0016682">
    <property type="term" value="F:oxidoreductase activity, acting on diphenols and related substances as donors, oxygen as acceptor"/>
    <property type="evidence" value="ECO:0000314"/>
    <property type="project" value="EcoCyc"/>
</dbReference>
<dbReference type="GO" id="GO:0019646">
    <property type="term" value="P:aerobic electron transport chain"/>
    <property type="evidence" value="ECO:0000314"/>
    <property type="project" value="EcoCyc"/>
</dbReference>
<dbReference type="InterPro" id="IPR002585">
    <property type="entry name" value="Cyt-d_ubiquinol_oxidase_su_1"/>
</dbReference>
<dbReference type="NCBIfam" id="NF011609">
    <property type="entry name" value="PRK15035.1"/>
    <property type="match status" value="1"/>
</dbReference>
<dbReference type="PANTHER" id="PTHR30365:SF7">
    <property type="entry name" value="CYTOCHROME BD-II UBIQUINOL OXIDASE SUBUNIT 1"/>
    <property type="match status" value="1"/>
</dbReference>
<dbReference type="PANTHER" id="PTHR30365">
    <property type="entry name" value="CYTOCHROME D UBIQUINOL OXIDASE"/>
    <property type="match status" value="1"/>
</dbReference>
<dbReference type="Pfam" id="PF01654">
    <property type="entry name" value="Cyt_bd_oxida_I"/>
    <property type="match status" value="1"/>
</dbReference>
<dbReference type="PIRSF" id="PIRSF006446">
    <property type="entry name" value="Cyt_quinol_oxidase_1"/>
    <property type="match status" value="1"/>
</dbReference>
<keyword id="KW-0002">3D-structure</keyword>
<keyword id="KW-0997">Cell inner membrane</keyword>
<keyword id="KW-1003">Cell membrane</keyword>
<keyword id="KW-0903">Direct protein sequencing</keyword>
<keyword id="KW-0249">Electron transport</keyword>
<keyword id="KW-0349">Heme</keyword>
<keyword id="KW-0408">Iron</keyword>
<keyword id="KW-0472">Membrane</keyword>
<keyword id="KW-0479">Metal-binding</keyword>
<keyword id="KW-1185">Reference proteome</keyword>
<keyword id="KW-1278">Translocase</keyword>
<keyword id="KW-0812">Transmembrane</keyword>
<keyword id="KW-1133">Transmembrane helix</keyword>
<keyword id="KW-0813">Transport</keyword>
<protein>
    <recommendedName>
        <fullName>Cytochrome bd-II ubiquinol oxidase subunit 1</fullName>
        <ecNumber evidence="8">7.1.1.3</ecNumber>
    </recommendedName>
    <alternativeName>
        <fullName>Cytochrome bd-II oxidase subunit I</fullName>
    </alternativeName>
</protein>
<comment type="function">
    <text evidence="4 5 6 7">A terminal oxidase that catalyzes quinol-dependent, Na(+)-independent oxygen uptake. Prefers menadiol over other quinols although ubiquinol was not tested (PubMed:8626304). Generates a proton motive force using protons and electrons from opposite sides of the membrane to generate H(2)O, transferring 1 proton/electron.</text>
</comment>
<comment type="catalytic activity">
    <reaction evidence="8">
        <text>2 a ubiquinol + O2 + n H(+)(in) = 2 a ubiquinone + 2 H2O + n H(+)(out)</text>
        <dbReference type="Rhea" id="RHEA:30251"/>
        <dbReference type="Rhea" id="RHEA-COMP:9565"/>
        <dbReference type="Rhea" id="RHEA-COMP:9566"/>
        <dbReference type="ChEBI" id="CHEBI:15377"/>
        <dbReference type="ChEBI" id="CHEBI:15378"/>
        <dbReference type="ChEBI" id="CHEBI:15379"/>
        <dbReference type="ChEBI" id="CHEBI:16389"/>
        <dbReference type="ChEBI" id="CHEBI:17976"/>
        <dbReference type="EC" id="7.1.1.3"/>
    </reaction>
</comment>
<comment type="cofactor">
    <cofactor evidence="8">
        <name>heme</name>
        <dbReference type="ChEBI" id="CHEBI:30413"/>
    </cofactor>
    <text evidence="8">May bind up to 3 heme groups per complex.</text>
</comment>
<comment type="activity regulation">
    <text evidence="7">Inhibited by cyanide; is more sensitive to cyanide than cytochrome bd-I oxidase.</text>
</comment>
<comment type="pathway">
    <text>Energy metabolism; oxidative phosphorylation.</text>
</comment>
<comment type="subunit">
    <text evidence="10">Heterodimer of subunits I and II.</text>
</comment>
<comment type="subcellular location">
    <subcellularLocation>
        <location evidence="2">Cell inner membrane</location>
        <topology evidence="2">Multi-pass membrane protein</topology>
    </subcellularLocation>
</comment>
<comment type="induction">
    <text evidence="3">Induced when bacterial cultures reach stationary phase; synthesis is triggered by phosphate starvation or a shift from aerobic to anaerobic conditions.</text>
</comment>
<comment type="PTM">
    <text>The N-terminus is blocked.</text>
</comment>
<comment type="disruption phenotype">
    <text evidence="4 5 6">3-fold decreased ubiquinone levels but no change in redox levels of the ubiquinone pool (in aerobically grown minimal medium with glucose).</text>
</comment>
<comment type="similarity">
    <text evidence="8">Belongs to the cytochrome ubiquinol oxidase subunit 1 family.</text>
</comment>
<comment type="caution">
    <text evidence="9">Was originally thought not to translocate protons.</text>
</comment>
<sequence>MWDVIDLSRWQFALTALYHFLFVPLTLGLIFLLAIMETIYVVTGKTIYRDMTRFWGKLFGINFALGVATGLTMEFQFGTNWSFYSNYVGDIFGAPLAMEALMAFFLESTFVGLFFFGWQRLNKYQHLLVTWLVAFGSNLSALWILNANGWMQYPTGAHFDIDTLRMEMTSFSELVFNPVSQVKFVHTVMAGYVTGAMFIMAISAWYLLRGRERNVALRSFAIGSVFGTLAIIGTLQLGDSSAYEVAQVQPVKLAAMEGEWQTEPAPAPFHVVAWPEQDQERNAFALKIPALLGILATHSLDKPVPGLKNLMAETYPRLQRGRMAWLLMQEISQGNREPHVLQAFRGLEGDLGYGMLLSRYAPDMNHVTAAQYQAAMRGAIPQVAPVFWSFRIMVGCGSLLLLVMLIALVQTLRGKIDQHRWVLKMALWSLPLPWIAIEAGWFMTEFGRQPWAIQDILPTYSAHSALTTGQLAFSLIMIVGLYTLFLIAEVYLMQKYARLGPSAMQSEQPTQQQG</sequence>